<protein>
    <recommendedName>
        <fullName evidence="6">Calmodulin-lysine N-methyltransferase</fullName>
        <shortName evidence="6">CLNMT</shortName>
        <shortName evidence="6">CaM KMT</shortName>
        <ecNumber evidence="2">2.1.1.60</ecNumber>
    </recommendedName>
</protein>
<evidence type="ECO:0000250" key="1">
    <source>
        <dbReference type="UniProtKB" id="B0K012"/>
    </source>
</evidence>
<evidence type="ECO:0000250" key="2">
    <source>
        <dbReference type="UniProtKB" id="Q6GQ33"/>
    </source>
</evidence>
<evidence type="ECO:0000250" key="3">
    <source>
        <dbReference type="UniProtKB" id="Q7Z624"/>
    </source>
</evidence>
<evidence type="ECO:0000269" key="4">
    <source>
    </source>
</evidence>
<evidence type="ECO:0000269" key="5">
    <source>
    </source>
</evidence>
<evidence type="ECO:0000303" key="6">
    <source>
    </source>
</evidence>
<evidence type="ECO:0000305" key="7"/>
<evidence type="ECO:0000312" key="8">
    <source>
        <dbReference type="Araport" id="AT4G35987"/>
    </source>
</evidence>
<evidence type="ECO:0000312" key="9">
    <source>
        <dbReference type="EMBL" id="CAA18493.1"/>
    </source>
</evidence>
<dbReference type="EC" id="2.1.1.60" evidence="2"/>
<dbReference type="EMBL" id="AL022373">
    <property type="protein sequence ID" value="CAA18493.1"/>
    <property type="molecule type" value="Genomic_DNA"/>
</dbReference>
<dbReference type="EMBL" id="AL161588">
    <property type="protein sequence ID" value="CAB81508.1"/>
    <property type="molecule type" value="Genomic_DNA"/>
</dbReference>
<dbReference type="EMBL" id="CP002687">
    <property type="protein sequence ID" value="AEE86599.1"/>
    <property type="molecule type" value="Genomic_DNA"/>
</dbReference>
<dbReference type="EMBL" id="BT029304">
    <property type="protein sequence ID" value="ABK32118.1"/>
    <property type="molecule type" value="mRNA"/>
</dbReference>
<dbReference type="PIR" id="T05491">
    <property type="entry name" value="T05491"/>
</dbReference>
<dbReference type="RefSeq" id="NP_680769.4">
    <molecule id="F4JNX3-1"/>
    <property type="nucleotide sequence ID" value="NM_148403.5"/>
</dbReference>
<dbReference type="SMR" id="F4JNX3"/>
<dbReference type="FunCoup" id="F4JNX3">
    <property type="interactions" value="2037"/>
</dbReference>
<dbReference type="STRING" id="3702.F4JNX3"/>
<dbReference type="PaxDb" id="3702-AT4G35987.1"/>
<dbReference type="ProteomicsDB" id="241076">
    <molecule id="F4JNX3-1"/>
</dbReference>
<dbReference type="EnsemblPlants" id="AT4G35987.1">
    <molecule id="F4JNX3-1"/>
    <property type="protein sequence ID" value="AT4G35987.1"/>
    <property type="gene ID" value="AT4G35987"/>
</dbReference>
<dbReference type="GeneID" id="829754"/>
<dbReference type="Gramene" id="AT4G35987.1">
    <molecule id="F4JNX3-1"/>
    <property type="protein sequence ID" value="AT4G35987.1"/>
    <property type="gene ID" value="AT4G35987"/>
</dbReference>
<dbReference type="KEGG" id="ath:AT4G35987"/>
<dbReference type="Araport" id="AT4G35987"/>
<dbReference type="TAIR" id="AT4G35987">
    <property type="gene designation" value="CAM KMT"/>
</dbReference>
<dbReference type="eggNOG" id="KOG3201">
    <property type="taxonomic scope" value="Eukaryota"/>
</dbReference>
<dbReference type="HOGENOM" id="CLU_057006_2_0_1"/>
<dbReference type="InParanoid" id="F4JNX3"/>
<dbReference type="OMA" id="WYYLAPQ"/>
<dbReference type="PhylomeDB" id="F4JNX3"/>
<dbReference type="PRO" id="PR:F4JNX3"/>
<dbReference type="Proteomes" id="UP000006548">
    <property type="component" value="Chromosome 4"/>
</dbReference>
<dbReference type="ExpressionAtlas" id="F4JNX3">
    <property type="expression patterns" value="baseline and differential"/>
</dbReference>
<dbReference type="GO" id="GO:0005737">
    <property type="term" value="C:cytoplasm"/>
    <property type="evidence" value="ECO:0007669"/>
    <property type="project" value="UniProtKB-SubCell"/>
</dbReference>
<dbReference type="GO" id="GO:0005634">
    <property type="term" value="C:nucleus"/>
    <property type="evidence" value="ECO:0007669"/>
    <property type="project" value="UniProtKB-SubCell"/>
</dbReference>
<dbReference type="GO" id="GO:0018025">
    <property type="term" value="F:calmodulin-lysine N-methyltransferase activity"/>
    <property type="evidence" value="ECO:0000315"/>
    <property type="project" value="UniProtKB"/>
</dbReference>
<dbReference type="GO" id="GO:0009738">
    <property type="term" value="P:abscisic acid-activated signaling pathway"/>
    <property type="evidence" value="ECO:0007669"/>
    <property type="project" value="UniProtKB-KW"/>
</dbReference>
<dbReference type="GO" id="GO:0009734">
    <property type="term" value="P:auxin-activated signaling pathway"/>
    <property type="evidence" value="ECO:0007669"/>
    <property type="project" value="UniProtKB-KW"/>
</dbReference>
<dbReference type="GO" id="GO:0009630">
    <property type="term" value="P:gravitropism"/>
    <property type="evidence" value="ECO:0000315"/>
    <property type="project" value="UniProtKB"/>
</dbReference>
<dbReference type="GO" id="GO:0032259">
    <property type="term" value="P:methylation"/>
    <property type="evidence" value="ECO:0000315"/>
    <property type="project" value="UniProtKB"/>
</dbReference>
<dbReference type="GO" id="GO:0009787">
    <property type="term" value="P:regulation of abscisic acid-activated signaling pathway"/>
    <property type="evidence" value="ECO:0000315"/>
    <property type="project" value="UniProtKB"/>
</dbReference>
<dbReference type="GO" id="GO:0010928">
    <property type="term" value="P:regulation of auxin mediated signaling pathway"/>
    <property type="evidence" value="ECO:0000315"/>
    <property type="project" value="UniProtKB"/>
</dbReference>
<dbReference type="GO" id="GO:1901000">
    <property type="term" value="P:regulation of response to salt stress"/>
    <property type="evidence" value="ECO:0000315"/>
    <property type="project" value="UniProtKB"/>
</dbReference>
<dbReference type="GO" id="GO:2000070">
    <property type="term" value="P:regulation of response to water deprivation"/>
    <property type="evidence" value="ECO:0000315"/>
    <property type="project" value="UniProtKB"/>
</dbReference>
<dbReference type="GO" id="GO:2000280">
    <property type="term" value="P:regulation of root development"/>
    <property type="evidence" value="ECO:0000315"/>
    <property type="project" value="UniProtKB"/>
</dbReference>
<dbReference type="GO" id="GO:0009737">
    <property type="term" value="P:response to abscisic acid"/>
    <property type="evidence" value="ECO:0000270"/>
    <property type="project" value="UniProtKB"/>
</dbReference>
<dbReference type="GO" id="GO:0009733">
    <property type="term" value="P:response to auxin"/>
    <property type="evidence" value="ECO:0000270"/>
    <property type="project" value="UniProtKB"/>
</dbReference>
<dbReference type="GO" id="GO:0009409">
    <property type="term" value="P:response to cold"/>
    <property type="evidence" value="ECO:0000315"/>
    <property type="project" value="UniProtKB"/>
</dbReference>
<dbReference type="GO" id="GO:0009408">
    <property type="term" value="P:response to heat"/>
    <property type="evidence" value="ECO:0000315"/>
    <property type="project" value="UniProtKB"/>
</dbReference>
<dbReference type="GO" id="GO:0002239">
    <property type="term" value="P:response to oomycetes"/>
    <property type="evidence" value="ECO:0000270"/>
    <property type="project" value="UniProtKB"/>
</dbReference>
<dbReference type="GO" id="GO:0006970">
    <property type="term" value="P:response to osmotic stress"/>
    <property type="evidence" value="ECO:0000270"/>
    <property type="project" value="UniProtKB"/>
</dbReference>
<dbReference type="GO" id="GO:1902074">
    <property type="term" value="P:response to salt"/>
    <property type="evidence" value="ECO:0000270"/>
    <property type="project" value="UniProtKB"/>
</dbReference>
<dbReference type="GO" id="GO:0009651">
    <property type="term" value="P:response to salt stress"/>
    <property type="evidence" value="ECO:0000270"/>
    <property type="project" value="UniProtKB"/>
</dbReference>
<dbReference type="GO" id="GO:0080147">
    <property type="term" value="P:root hair cell development"/>
    <property type="evidence" value="ECO:0000315"/>
    <property type="project" value="UniProtKB"/>
</dbReference>
<dbReference type="FunFam" id="3.40.50.150:FF:000301">
    <property type="entry name" value="Calmodulin-lysine N-methyltransferase isoform B"/>
    <property type="match status" value="1"/>
</dbReference>
<dbReference type="Gene3D" id="3.40.50.150">
    <property type="entry name" value="Vaccinia Virus protein VP39"/>
    <property type="match status" value="1"/>
</dbReference>
<dbReference type="InterPro" id="IPR025800">
    <property type="entry name" value="CaM-Lys-N-MeTrfase"/>
</dbReference>
<dbReference type="InterPro" id="IPR019410">
    <property type="entry name" value="Methyltransf_16"/>
</dbReference>
<dbReference type="InterPro" id="IPR029063">
    <property type="entry name" value="SAM-dependent_MTases_sf"/>
</dbReference>
<dbReference type="PANTHER" id="PTHR13539">
    <property type="entry name" value="CALMODULIN-LYSINE N-METHYLTRANSFERASE"/>
    <property type="match status" value="1"/>
</dbReference>
<dbReference type="PANTHER" id="PTHR13539:SF3">
    <property type="entry name" value="CALMODULIN-LYSINE N-METHYLTRANSFERASE"/>
    <property type="match status" value="1"/>
</dbReference>
<dbReference type="Pfam" id="PF10294">
    <property type="entry name" value="Methyltransf_16"/>
    <property type="match status" value="1"/>
</dbReference>
<dbReference type="SUPFAM" id="SSF53335">
    <property type="entry name" value="S-adenosyl-L-methionine-dependent methyltransferases"/>
    <property type="match status" value="1"/>
</dbReference>
<organism>
    <name type="scientific">Arabidopsis thaliana</name>
    <name type="common">Mouse-ear cress</name>
    <dbReference type="NCBI Taxonomy" id="3702"/>
    <lineage>
        <taxon>Eukaryota</taxon>
        <taxon>Viridiplantae</taxon>
        <taxon>Streptophyta</taxon>
        <taxon>Embryophyta</taxon>
        <taxon>Tracheophyta</taxon>
        <taxon>Spermatophyta</taxon>
        <taxon>Magnoliopsida</taxon>
        <taxon>eudicotyledons</taxon>
        <taxon>Gunneridae</taxon>
        <taxon>Pentapetalae</taxon>
        <taxon>rosids</taxon>
        <taxon>malvids</taxon>
        <taxon>Brassicales</taxon>
        <taxon>Brassicaceae</taxon>
        <taxon>Camelineae</taxon>
        <taxon>Arabidopsis</taxon>
    </lineage>
</organism>
<sequence>MDPTSSSSSALRWKILRQALLRRSDSQSQTETKRISRKATQGFNLIPCQVVDSSPQSDKSREASVCYTLPITGSPKLYLTQRVDNCSDLNDFEISNRYNIDNTGLVCQWPSEEVLAYFCKSQPERFRGKRVIELGSGYGLAGLVIAAATEASEVVISDGNPQVVNYIKRNIETNSMAFGGTSVKAMELHWNQHQLSELTNTFDIIVASDCTFFKEFHKDLARTIKMLLKAKKASEALFFSPKRGDSLEKFMKEIKDIGLHYILTENYDAQVWKRHETLVKGDEAWPNYDKNHCYPLLIQITNQI</sequence>
<proteinExistence type="evidence at transcript level"/>
<gene>
    <name evidence="6" type="primary">CaMKMT</name>
    <name evidence="8" type="ordered locus">At4g35987</name>
    <name evidence="9" type="ORF">T19K4.120</name>
</gene>
<reference key="1">
    <citation type="journal article" date="1999" name="Nature">
        <title>Sequence and analysis of chromosome 4 of the plant Arabidopsis thaliana.</title>
        <authorList>
            <person name="Mayer K.F.X."/>
            <person name="Schueller C."/>
            <person name="Wambutt R."/>
            <person name="Murphy G."/>
            <person name="Volckaert G."/>
            <person name="Pohl T."/>
            <person name="Duesterhoeft A."/>
            <person name="Stiekema W."/>
            <person name="Entian K.-D."/>
            <person name="Terryn N."/>
            <person name="Harris B."/>
            <person name="Ansorge W."/>
            <person name="Brandt P."/>
            <person name="Grivell L.A."/>
            <person name="Rieger M."/>
            <person name="Weichselgartner M."/>
            <person name="de Simone V."/>
            <person name="Obermaier B."/>
            <person name="Mache R."/>
            <person name="Mueller M."/>
            <person name="Kreis M."/>
            <person name="Delseny M."/>
            <person name="Puigdomenech P."/>
            <person name="Watson M."/>
            <person name="Schmidtheini T."/>
            <person name="Reichert B."/>
            <person name="Portetelle D."/>
            <person name="Perez-Alonso M."/>
            <person name="Boutry M."/>
            <person name="Bancroft I."/>
            <person name="Vos P."/>
            <person name="Hoheisel J."/>
            <person name="Zimmermann W."/>
            <person name="Wedler H."/>
            <person name="Ridley P."/>
            <person name="Langham S.-A."/>
            <person name="McCullagh B."/>
            <person name="Bilham L."/>
            <person name="Robben J."/>
            <person name="van der Schueren J."/>
            <person name="Grymonprez B."/>
            <person name="Chuang Y.-J."/>
            <person name="Vandenbussche F."/>
            <person name="Braeken M."/>
            <person name="Weltjens I."/>
            <person name="Voet M."/>
            <person name="Bastiaens I."/>
            <person name="Aert R."/>
            <person name="Defoor E."/>
            <person name="Weitzenegger T."/>
            <person name="Bothe G."/>
            <person name="Ramsperger U."/>
            <person name="Hilbert H."/>
            <person name="Braun M."/>
            <person name="Holzer E."/>
            <person name="Brandt A."/>
            <person name="Peters S."/>
            <person name="van Staveren M."/>
            <person name="Dirkse W."/>
            <person name="Mooijman P."/>
            <person name="Klein Lankhorst R."/>
            <person name="Rose M."/>
            <person name="Hauf J."/>
            <person name="Koetter P."/>
            <person name="Berneiser S."/>
            <person name="Hempel S."/>
            <person name="Feldpausch M."/>
            <person name="Lamberth S."/>
            <person name="Van den Daele H."/>
            <person name="De Keyser A."/>
            <person name="Buysshaert C."/>
            <person name="Gielen J."/>
            <person name="Villarroel R."/>
            <person name="De Clercq R."/>
            <person name="van Montagu M."/>
            <person name="Rogers J."/>
            <person name="Cronin A."/>
            <person name="Quail M.A."/>
            <person name="Bray-Allen S."/>
            <person name="Clark L."/>
            <person name="Doggett J."/>
            <person name="Hall S."/>
            <person name="Kay M."/>
            <person name="Lennard N."/>
            <person name="McLay K."/>
            <person name="Mayes R."/>
            <person name="Pettett A."/>
            <person name="Rajandream M.A."/>
            <person name="Lyne M."/>
            <person name="Benes V."/>
            <person name="Rechmann S."/>
            <person name="Borkova D."/>
            <person name="Bloecker H."/>
            <person name="Scharfe M."/>
            <person name="Grimm M."/>
            <person name="Loehnert T.-H."/>
            <person name="Dose S."/>
            <person name="de Haan M."/>
            <person name="Maarse A.C."/>
            <person name="Schaefer M."/>
            <person name="Mueller-Auer S."/>
            <person name="Gabel C."/>
            <person name="Fuchs M."/>
            <person name="Fartmann B."/>
            <person name="Granderath K."/>
            <person name="Dauner D."/>
            <person name="Herzl A."/>
            <person name="Neumann S."/>
            <person name="Argiriou A."/>
            <person name="Vitale D."/>
            <person name="Liguori R."/>
            <person name="Piravandi E."/>
            <person name="Massenet O."/>
            <person name="Quigley F."/>
            <person name="Clabauld G."/>
            <person name="Muendlein A."/>
            <person name="Felber R."/>
            <person name="Schnabl S."/>
            <person name="Hiller R."/>
            <person name="Schmidt W."/>
            <person name="Lecharny A."/>
            <person name="Aubourg S."/>
            <person name="Chefdor F."/>
            <person name="Cooke R."/>
            <person name="Berger C."/>
            <person name="Monfort A."/>
            <person name="Casacuberta E."/>
            <person name="Gibbons T."/>
            <person name="Weber N."/>
            <person name="Vandenbol M."/>
            <person name="Bargues M."/>
            <person name="Terol J."/>
            <person name="Torres A."/>
            <person name="Perez-Perez A."/>
            <person name="Purnelle B."/>
            <person name="Bent E."/>
            <person name="Johnson S."/>
            <person name="Tacon D."/>
            <person name="Jesse T."/>
            <person name="Heijnen L."/>
            <person name="Schwarz S."/>
            <person name="Scholler P."/>
            <person name="Heber S."/>
            <person name="Francs P."/>
            <person name="Bielke C."/>
            <person name="Frishman D."/>
            <person name="Haase D."/>
            <person name="Lemcke K."/>
            <person name="Mewes H.-W."/>
            <person name="Stocker S."/>
            <person name="Zaccaria P."/>
            <person name="Bevan M."/>
            <person name="Wilson R.K."/>
            <person name="de la Bastide M."/>
            <person name="Habermann K."/>
            <person name="Parnell L."/>
            <person name="Dedhia N."/>
            <person name="Gnoj L."/>
            <person name="Schutz K."/>
            <person name="Huang E."/>
            <person name="Spiegel L."/>
            <person name="Sekhon M."/>
            <person name="Murray J."/>
            <person name="Sheet P."/>
            <person name="Cordes M."/>
            <person name="Abu-Threideh J."/>
            <person name="Stoneking T."/>
            <person name="Kalicki J."/>
            <person name="Graves T."/>
            <person name="Harmon G."/>
            <person name="Edwards J."/>
            <person name="Latreille P."/>
            <person name="Courtney L."/>
            <person name="Cloud J."/>
            <person name="Abbott A."/>
            <person name="Scott K."/>
            <person name="Johnson D."/>
            <person name="Minx P."/>
            <person name="Bentley D."/>
            <person name="Fulton B."/>
            <person name="Miller N."/>
            <person name="Greco T."/>
            <person name="Kemp K."/>
            <person name="Kramer J."/>
            <person name="Fulton L."/>
            <person name="Mardis E."/>
            <person name="Dante M."/>
            <person name="Pepin K."/>
            <person name="Hillier L.W."/>
            <person name="Nelson J."/>
            <person name="Spieth J."/>
            <person name="Ryan E."/>
            <person name="Andrews S."/>
            <person name="Geisel C."/>
            <person name="Layman D."/>
            <person name="Du H."/>
            <person name="Ali J."/>
            <person name="Berghoff A."/>
            <person name="Jones K."/>
            <person name="Drone K."/>
            <person name="Cotton M."/>
            <person name="Joshu C."/>
            <person name="Antonoiu B."/>
            <person name="Zidanic M."/>
            <person name="Strong C."/>
            <person name="Sun H."/>
            <person name="Lamar B."/>
            <person name="Yordan C."/>
            <person name="Ma P."/>
            <person name="Zhong J."/>
            <person name="Preston R."/>
            <person name="Vil D."/>
            <person name="Shekher M."/>
            <person name="Matero A."/>
            <person name="Shah R."/>
            <person name="Swaby I.K."/>
            <person name="O'Shaughnessy A."/>
            <person name="Rodriguez M."/>
            <person name="Hoffman J."/>
            <person name="Till S."/>
            <person name="Granat S."/>
            <person name="Shohdy N."/>
            <person name="Hasegawa A."/>
            <person name="Hameed A."/>
            <person name="Lodhi M."/>
            <person name="Johnson A."/>
            <person name="Chen E."/>
            <person name="Marra M.A."/>
            <person name="Martienssen R."/>
            <person name="McCombie W.R."/>
        </authorList>
    </citation>
    <scope>NUCLEOTIDE SEQUENCE [LARGE SCALE GENOMIC DNA]</scope>
    <source>
        <strain>cv. Columbia</strain>
    </source>
</reference>
<reference key="2">
    <citation type="journal article" date="2017" name="Plant J.">
        <title>Araport11: a complete reannotation of the Arabidopsis thaliana reference genome.</title>
        <authorList>
            <person name="Cheng C.Y."/>
            <person name="Krishnakumar V."/>
            <person name="Chan A.P."/>
            <person name="Thibaud-Nissen F."/>
            <person name="Schobel S."/>
            <person name="Town C.D."/>
        </authorList>
    </citation>
    <scope>GENOME REANNOTATION</scope>
    <source>
        <strain>cv. Columbia</strain>
    </source>
</reference>
<reference key="3">
    <citation type="submission" date="2006-11" db="EMBL/GenBank/DDBJ databases">
        <title>Arabidopsis ORF Clones.</title>
        <authorList>
            <person name="Bautista V.R."/>
            <person name="Kim C.J."/>
            <person name="Chen H."/>
            <person name="Quinitio C."/>
            <person name="Ecker J.R."/>
        </authorList>
    </citation>
    <scope>NUCLEOTIDE SEQUENCE [MRNA] (ISOFORM 2)</scope>
    <source>
        <strain>cv. Columbia</strain>
    </source>
</reference>
<reference key="4">
    <citation type="journal article" date="2013" name="Plant Cell">
        <title>Calmodulin-mediated signal transduction pathways in Arabidopsis are fine-tuned by methylation.</title>
        <authorList>
            <person name="Banerjee J."/>
            <person name="Magnani R."/>
            <person name="Nair M."/>
            <person name="Dirk L.M."/>
            <person name="DeBolt S."/>
            <person name="Maiti I.B."/>
            <person name="Houtz R.L."/>
        </authorList>
    </citation>
    <scope>FUNCTION</scope>
    <scope>DISRUPTION PHENOTYPE</scope>
    <scope>TISSUE SPECIFICITY</scope>
    <scope>DEVELOPMENTAL STAGE</scope>
    <scope>INDUCTION BY AUXIN; SALT; KINETIN AND ABSCISIC ACID</scope>
    <source>
        <strain>cv. Columbia</strain>
    </source>
</reference>
<reference key="5">
    <citation type="journal article" date="2013" name="PLoS ONE">
        <title>An intergenic region shared by At4g35985 and At4g35987 in Arabidopsis thaliana is a tissue specific and stress inducible bidirectional promoter analyzed in transgenic arabidopsis and tobacco plants.</title>
        <authorList>
            <person name="Banerjee J."/>
            <person name="Sahoo D.K."/>
            <person name="Dey N."/>
            <person name="Houtz R.L."/>
            <person name="Maiti I.B."/>
        </authorList>
    </citation>
    <scope>TISSUE SPECIFICITY</scope>
    <scope>DEVELOPMENTAL STAGE</scope>
    <scope>INDUCTION BY BIOTIC STRESS; SALT STRESS AND MANNITOL</scope>
    <source>
        <strain>cv. Columbia</strain>
    </source>
</reference>
<comment type="function">
    <text evidence="5">Catalyzes the trimethylation of calmodulin (PubMed:24285794). Regulates roots development probably by modulating auxin signaling responses. May be involved in gravitropism. Involved in abscisic acid (ABA)-mediated and abiotic stress responses, including salt (NaCl), cold, drought and heat stresses (PubMed:24285794).</text>
</comment>
<comment type="catalytic activity">
    <reaction evidence="2">
        <text>[calmodulin]-L-lysine + S-adenosyl-L-methionine = [calmodulin]-N(6)-methyl-L-lysine + S-adenosyl-L-homocysteine + H(+)</text>
        <dbReference type="Rhea" id="RHEA:21556"/>
        <dbReference type="Rhea" id="RHEA-COMP:11360"/>
        <dbReference type="Rhea" id="RHEA-COMP:11361"/>
        <dbReference type="ChEBI" id="CHEBI:15378"/>
        <dbReference type="ChEBI" id="CHEBI:29969"/>
        <dbReference type="ChEBI" id="CHEBI:57856"/>
        <dbReference type="ChEBI" id="CHEBI:59789"/>
        <dbReference type="ChEBI" id="CHEBI:61929"/>
        <dbReference type="EC" id="2.1.1.60"/>
    </reaction>
</comment>
<comment type="subunit">
    <text evidence="1">Monomer.</text>
</comment>
<comment type="subcellular location">
    <subcellularLocation>
        <location evidence="3">Cytoplasm</location>
    </subcellularLocation>
    <subcellularLocation>
        <location evidence="3">Nucleus</location>
    </subcellularLocation>
</comment>
<comment type="alternative products">
    <event type="alternative splicing"/>
    <isoform>
        <id>F4JNX3-1</id>
        <name>1</name>
        <sequence type="displayed"/>
    </isoform>
    <isoform>
        <id>F4JNX3-2</id>
        <name>2</name>
        <sequence type="described" ref="VSP_059985"/>
    </isoform>
</comment>
<comment type="tissue specificity">
    <text evidence="4 5">Expressed in discreet spatial and tissue-specific patterns including root tips, leaves-tips, floral buds, stamens, hydathodes, stigma, anther, siliques, apical meristems and germinating seeds (PubMed:24260266, PubMed:24285794). Also observed at high levels in the root stele region (PubMed:24260266).</text>
</comment>
<comment type="developmental stage">
    <text evidence="4 5">After seed stratification, first observed in the micropylar end, later present in the endosperm region and in the testa, and finally accumulates in the endosperm and emerging radicle. In seedlings, first detected in the root and cotyledon tips, expression level reaches a maximal at the cotyledonary leaf stage and is later confined in the shoot apical meristem. In roots, expressed at the primary root tip, at the basal side of root curvature, and at the lateral root tip (PubMed:24285794). Also observed in very young primordia, floral buds, and stamens (PubMed:24260266, PubMed:24285794). In stamens, mostly present in the anther containing immature pollen and, at low levels, in the filament. In siliques, highly expressed in the abscission zone and, to a lower extent, in developing seeds (PubMed:24285794).</text>
</comment>
<comment type="induction">
    <text evidence="4 5">Induced by salt (NaCl) stress (PubMed:24260266, PubMed:24285794). Accumulates in response to osmotic stress (e.g. mannitol) and upon biotic stress, e.g. inoculation with the oomycete P.tabacina (PubMed:24260266). Triggered by auxins indole-3-acetic acid (IAA) and 2,4-dichlorophenoxyacetic acid (2,4-D). Repressed by kinetin or abscisic acid (ABA) treatments (PubMed:24285794).</text>
</comment>
<comment type="disruption phenotype">
    <text evidence="5">Suppressed calmodulin (CaM) methylation, especially in roots. Longer roots with ectopic root hair cells in atrichoblast cell files and the presence of nonhair cells in trichoblast cell files. Increased number of epidermal cells in the root elongation zone. Reduced root growth inhibition mediated by auxins indole-3-acetic acid (IAA) and 2,4-dichlorophenoxyacetic acid (2,4-D). Reduced sensitivity to abscisic acid (ABA)-mediated stress leading to green cotyledons and normal germination in the presence of ABA. Increased tolerance to abiotic stress such as salt (NaCl), cold, drought and heat stresses.</text>
</comment>
<comment type="similarity">
    <text evidence="7">Belongs to the class I-like SAM-binding methyltransferase superfamily. CLNMT methyltransferase family.</text>
</comment>
<feature type="chain" id="PRO_0000445938" description="Calmodulin-lysine N-methyltransferase">
    <location>
        <begin position="1"/>
        <end position="304"/>
    </location>
</feature>
<feature type="splice variant" id="VSP_059985" description="In isoform 2.">
    <location>
        <begin position="1"/>
        <end position="175"/>
    </location>
</feature>
<accession>F4JNX3</accession>
<accession>O65636</accession>
<name>CMKMT_ARATH</name>
<keyword id="KW-0938">Abscisic acid signaling pathway</keyword>
<keyword id="KW-0025">Alternative splicing</keyword>
<keyword id="KW-0927">Auxin signaling pathway</keyword>
<keyword id="KW-0963">Cytoplasm</keyword>
<keyword id="KW-0217">Developmental protein</keyword>
<keyword id="KW-0489">Methyltransferase</keyword>
<keyword id="KW-0539">Nucleus</keyword>
<keyword id="KW-1185">Reference proteome</keyword>
<keyword id="KW-0808">Transferase</keyword>